<comment type="similarity">
    <text evidence="1">Belongs to the bacterial ribosomal protein bL34 family.</text>
</comment>
<dbReference type="EMBL" id="BX936398">
    <property type="protein sequence ID" value="CAH23183.1"/>
    <property type="molecule type" value="Genomic_DNA"/>
</dbReference>
<dbReference type="RefSeq" id="WP_002220736.1">
    <property type="nucleotide sequence ID" value="NZ_CP009712.1"/>
</dbReference>
<dbReference type="SMR" id="Q663T0"/>
<dbReference type="GeneID" id="97458397"/>
<dbReference type="KEGG" id="ypo:BZ17_2631"/>
<dbReference type="KEGG" id="yps:YPTB3945"/>
<dbReference type="PATRIC" id="fig|273123.14.peg.2758"/>
<dbReference type="Proteomes" id="UP000001011">
    <property type="component" value="Chromosome"/>
</dbReference>
<dbReference type="GO" id="GO:1990904">
    <property type="term" value="C:ribonucleoprotein complex"/>
    <property type="evidence" value="ECO:0007669"/>
    <property type="project" value="UniProtKB-KW"/>
</dbReference>
<dbReference type="GO" id="GO:0005840">
    <property type="term" value="C:ribosome"/>
    <property type="evidence" value="ECO:0007669"/>
    <property type="project" value="UniProtKB-KW"/>
</dbReference>
<dbReference type="GO" id="GO:0003735">
    <property type="term" value="F:structural constituent of ribosome"/>
    <property type="evidence" value="ECO:0007669"/>
    <property type="project" value="InterPro"/>
</dbReference>
<dbReference type="GO" id="GO:0006412">
    <property type="term" value="P:translation"/>
    <property type="evidence" value="ECO:0007669"/>
    <property type="project" value="UniProtKB-UniRule"/>
</dbReference>
<dbReference type="FunFam" id="1.10.287.3980:FF:000001">
    <property type="entry name" value="Mitochondrial ribosomal protein L34"/>
    <property type="match status" value="1"/>
</dbReference>
<dbReference type="Gene3D" id="1.10.287.3980">
    <property type="match status" value="1"/>
</dbReference>
<dbReference type="HAMAP" id="MF_00391">
    <property type="entry name" value="Ribosomal_bL34"/>
    <property type="match status" value="1"/>
</dbReference>
<dbReference type="InterPro" id="IPR000271">
    <property type="entry name" value="Ribosomal_bL34"/>
</dbReference>
<dbReference type="InterPro" id="IPR020939">
    <property type="entry name" value="Ribosomal_bL34_CS"/>
</dbReference>
<dbReference type="NCBIfam" id="TIGR01030">
    <property type="entry name" value="rpmH_bact"/>
    <property type="match status" value="1"/>
</dbReference>
<dbReference type="PANTHER" id="PTHR14503:SF4">
    <property type="entry name" value="LARGE RIBOSOMAL SUBUNIT PROTEIN BL34M"/>
    <property type="match status" value="1"/>
</dbReference>
<dbReference type="PANTHER" id="PTHR14503">
    <property type="entry name" value="MITOCHONDRIAL RIBOSOMAL PROTEIN 34 FAMILY MEMBER"/>
    <property type="match status" value="1"/>
</dbReference>
<dbReference type="Pfam" id="PF00468">
    <property type="entry name" value="Ribosomal_L34"/>
    <property type="match status" value="1"/>
</dbReference>
<dbReference type="PROSITE" id="PS00784">
    <property type="entry name" value="RIBOSOMAL_L34"/>
    <property type="match status" value="1"/>
</dbReference>
<feature type="chain" id="PRO_0000187512" description="Large ribosomal subunit protein bL34">
    <location>
        <begin position="1"/>
        <end position="46"/>
    </location>
</feature>
<feature type="region of interest" description="Disordered" evidence="2">
    <location>
        <begin position="26"/>
        <end position="46"/>
    </location>
</feature>
<feature type="compositionally biased region" description="Basic residues" evidence="2">
    <location>
        <begin position="31"/>
        <end position="40"/>
    </location>
</feature>
<evidence type="ECO:0000255" key="1">
    <source>
        <dbReference type="HAMAP-Rule" id="MF_00391"/>
    </source>
</evidence>
<evidence type="ECO:0000256" key="2">
    <source>
        <dbReference type="SAM" id="MobiDB-lite"/>
    </source>
</evidence>
<evidence type="ECO:0000305" key="3"/>
<sequence>MKRTFQPSVLKRNRSHGFRARMATKNGRQVLARRRAKSRSRLTVSK</sequence>
<proteinExistence type="inferred from homology"/>
<organism>
    <name type="scientific">Yersinia pseudotuberculosis serotype I (strain IP32953)</name>
    <dbReference type="NCBI Taxonomy" id="273123"/>
    <lineage>
        <taxon>Bacteria</taxon>
        <taxon>Pseudomonadati</taxon>
        <taxon>Pseudomonadota</taxon>
        <taxon>Gammaproteobacteria</taxon>
        <taxon>Enterobacterales</taxon>
        <taxon>Yersiniaceae</taxon>
        <taxon>Yersinia</taxon>
    </lineage>
</organism>
<name>RL34_YERPS</name>
<gene>
    <name evidence="1" type="primary">rpmH</name>
    <name type="ordered locus">YPTB3945</name>
</gene>
<reference key="1">
    <citation type="journal article" date="2004" name="Proc. Natl. Acad. Sci. U.S.A.">
        <title>Insights into the evolution of Yersinia pestis through whole-genome comparison with Yersinia pseudotuberculosis.</title>
        <authorList>
            <person name="Chain P.S.G."/>
            <person name="Carniel E."/>
            <person name="Larimer F.W."/>
            <person name="Lamerdin J."/>
            <person name="Stoutland P.O."/>
            <person name="Regala W.M."/>
            <person name="Georgescu A.M."/>
            <person name="Vergez L.M."/>
            <person name="Land M.L."/>
            <person name="Motin V.L."/>
            <person name="Brubaker R.R."/>
            <person name="Fowler J."/>
            <person name="Hinnebusch J."/>
            <person name="Marceau M."/>
            <person name="Medigue C."/>
            <person name="Simonet M."/>
            <person name="Chenal-Francisque V."/>
            <person name="Souza B."/>
            <person name="Dacheux D."/>
            <person name="Elliott J.M."/>
            <person name="Derbise A."/>
            <person name="Hauser L.J."/>
            <person name="Garcia E."/>
        </authorList>
    </citation>
    <scope>NUCLEOTIDE SEQUENCE [LARGE SCALE GENOMIC DNA]</scope>
    <source>
        <strain>IP32953</strain>
    </source>
</reference>
<keyword id="KW-0687">Ribonucleoprotein</keyword>
<keyword id="KW-0689">Ribosomal protein</keyword>
<accession>Q663T0</accession>
<protein>
    <recommendedName>
        <fullName evidence="1">Large ribosomal subunit protein bL34</fullName>
    </recommendedName>
    <alternativeName>
        <fullName evidence="3">50S ribosomal protein L34</fullName>
    </alternativeName>
</protein>